<keyword id="KW-0687">Ribonucleoprotein</keyword>
<keyword id="KW-0689">Ribosomal protein</keyword>
<keyword id="KW-0694">RNA-binding</keyword>
<keyword id="KW-0699">rRNA-binding</keyword>
<comment type="function">
    <text evidence="1">One of the primary rRNA binding proteins, this protein initially binds near the 5'-end of the 23S rRNA. It is important during the early stages of 50S assembly. It makes multiple contacts with different domains of the 23S rRNA in the assembled 50S subunit and ribosome.</text>
</comment>
<comment type="function">
    <text evidence="1">Forms part of the polypeptide exit tunnel.</text>
</comment>
<comment type="subunit">
    <text evidence="1">Part of the 50S ribosomal subunit.</text>
</comment>
<comment type="similarity">
    <text evidence="1">Belongs to the universal ribosomal protein uL4 family.</text>
</comment>
<gene>
    <name evidence="1" type="primary">rplD</name>
    <name type="ordered locus">Tfu_2645</name>
</gene>
<proteinExistence type="inferred from homology"/>
<evidence type="ECO:0000255" key="1">
    <source>
        <dbReference type="HAMAP-Rule" id="MF_01328"/>
    </source>
</evidence>
<evidence type="ECO:0000256" key="2">
    <source>
        <dbReference type="SAM" id="MobiDB-lite"/>
    </source>
</evidence>
<evidence type="ECO:0000305" key="3"/>
<name>RL4_THEFY</name>
<sequence length="222" mass="24351">MATIEVKDREGAAKGSVELPDEIFAQKVNIPLIHQVVVAQQAAGRQGTHSTKTRGEVRGGGKKPYRQKGTGRARQGSVRAPQFTGGGTVHGPKPRDYAQRTPKKMKAAALRGALSNRAQHGRIHVVSEFVPEDVTTKRTQTALKTLRKITDSDKVLVVLSREDQHNRLALRNLPEVHILDANQVNTYDVLYADDIVFTEAGYQEFLAHAKGSKIAASQEDDQ</sequence>
<accession>Q47LJ4</accession>
<dbReference type="EMBL" id="CP000088">
    <property type="protein sequence ID" value="AAZ56678.1"/>
    <property type="molecule type" value="Genomic_DNA"/>
</dbReference>
<dbReference type="RefSeq" id="WP_011293068.1">
    <property type="nucleotide sequence ID" value="NC_007333.1"/>
</dbReference>
<dbReference type="SMR" id="Q47LJ4"/>
<dbReference type="STRING" id="269800.Tfu_2645"/>
<dbReference type="KEGG" id="tfu:Tfu_2645"/>
<dbReference type="eggNOG" id="COG0088">
    <property type="taxonomic scope" value="Bacteria"/>
</dbReference>
<dbReference type="HOGENOM" id="CLU_041575_5_0_11"/>
<dbReference type="OrthoDB" id="9803201at2"/>
<dbReference type="GO" id="GO:1990904">
    <property type="term" value="C:ribonucleoprotein complex"/>
    <property type="evidence" value="ECO:0007669"/>
    <property type="project" value="UniProtKB-KW"/>
</dbReference>
<dbReference type="GO" id="GO:0005840">
    <property type="term" value="C:ribosome"/>
    <property type="evidence" value="ECO:0007669"/>
    <property type="project" value="UniProtKB-KW"/>
</dbReference>
<dbReference type="GO" id="GO:0019843">
    <property type="term" value="F:rRNA binding"/>
    <property type="evidence" value="ECO:0007669"/>
    <property type="project" value="UniProtKB-UniRule"/>
</dbReference>
<dbReference type="GO" id="GO:0003735">
    <property type="term" value="F:structural constituent of ribosome"/>
    <property type="evidence" value="ECO:0007669"/>
    <property type="project" value="InterPro"/>
</dbReference>
<dbReference type="GO" id="GO:0006412">
    <property type="term" value="P:translation"/>
    <property type="evidence" value="ECO:0007669"/>
    <property type="project" value="UniProtKB-UniRule"/>
</dbReference>
<dbReference type="FunFam" id="3.40.1370.10:FF:000004">
    <property type="entry name" value="50S ribosomal protein L4"/>
    <property type="match status" value="1"/>
</dbReference>
<dbReference type="Gene3D" id="3.40.1370.10">
    <property type="match status" value="1"/>
</dbReference>
<dbReference type="HAMAP" id="MF_01328_B">
    <property type="entry name" value="Ribosomal_uL4_B"/>
    <property type="match status" value="1"/>
</dbReference>
<dbReference type="InterPro" id="IPR002136">
    <property type="entry name" value="Ribosomal_uL4"/>
</dbReference>
<dbReference type="InterPro" id="IPR013005">
    <property type="entry name" value="Ribosomal_uL4-like"/>
</dbReference>
<dbReference type="InterPro" id="IPR023574">
    <property type="entry name" value="Ribosomal_uL4_dom_sf"/>
</dbReference>
<dbReference type="NCBIfam" id="TIGR03953">
    <property type="entry name" value="rplD_bact"/>
    <property type="match status" value="1"/>
</dbReference>
<dbReference type="PANTHER" id="PTHR10746">
    <property type="entry name" value="50S RIBOSOMAL PROTEIN L4"/>
    <property type="match status" value="1"/>
</dbReference>
<dbReference type="PANTHER" id="PTHR10746:SF6">
    <property type="entry name" value="LARGE RIBOSOMAL SUBUNIT PROTEIN UL4M"/>
    <property type="match status" value="1"/>
</dbReference>
<dbReference type="Pfam" id="PF00573">
    <property type="entry name" value="Ribosomal_L4"/>
    <property type="match status" value="1"/>
</dbReference>
<dbReference type="SUPFAM" id="SSF52166">
    <property type="entry name" value="Ribosomal protein L4"/>
    <property type="match status" value="1"/>
</dbReference>
<organism>
    <name type="scientific">Thermobifida fusca (strain YX)</name>
    <dbReference type="NCBI Taxonomy" id="269800"/>
    <lineage>
        <taxon>Bacteria</taxon>
        <taxon>Bacillati</taxon>
        <taxon>Actinomycetota</taxon>
        <taxon>Actinomycetes</taxon>
        <taxon>Streptosporangiales</taxon>
        <taxon>Nocardiopsidaceae</taxon>
        <taxon>Thermobifida</taxon>
    </lineage>
</organism>
<protein>
    <recommendedName>
        <fullName evidence="1">Large ribosomal subunit protein uL4</fullName>
    </recommendedName>
    <alternativeName>
        <fullName evidence="3">50S ribosomal protein L4</fullName>
    </alternativeName>
</protein>
<reference key="1">
    <citation type="journal article" date="2007" name="J. Bacteriol.">
        <title>Genome sequence and analysis of the soil cellulolytic actinomycete Thermobifida fusca YX.</title>
        <authorList>
            <person name="Lykidis A."/>
            <person name="Mavromatis K."/>
            <person name="Ivanova N."/>
            <person name="Anderson I."/>
            <person name="Land M."/>
            <person name="DiBartolo G."/>
            <person name="Martinez M."/>
            <person name="Lapidus A."/>
            <person name="Lucas S."/>
            <person name="Copeland A."/>
            <person name="Richardson P."/>
            <person name="Wilson D.B."/>
            <person name="Kyrpides N."/>
        </authorList>
    </citation>
    <scope>NUCLEOTIDE SEQUENCE [LARGE SCALE GENOMIC DNA]</scope>
    <source>
        <strain>YX</strain>
    </source>
</reference>
<feature type="chain" id="PRO_0000242454" description="Large ribosomal subunit protein uL4">
    <location>
        <begin position="1"/>
        <end position="222"/>
    </location>
</feature>
<feature type="region of interest" description="Disordered" evidence="2">
    <location>
        <begin position="42"/>
        <end position="100"/>
    </location>
</feature>
<feature type="compositionally biased region" description="Basic residues" evidence="2">
    <location>
        <begin position="60"/>
        <end position="71"/>
    </location>
</feature>